<evidence type="ECO:0000255" key="1">
    <source>
        <dbReference type="HAMAP-Rule" id="MF_00206"/>
    </source>
</evidence>
<evidence type="ECO:0000255" key="2">
    <source>
        <dbReference type="PROSITE-ProRule" id="PRU01266"/>
    </source>
</evidence>
<evidence type="ECO:0000256" key="3">
    <source>
        <dbReference type="SAM" id="MobiDB-lite"/>
    </source>
</evidence>
<organism>
    <name type="scientific">Pseudomonas putida (strain W619)</name>
    <dbReference type="NCBI Taxonomy" id="390235"/>
    <lineage>
        <taxon>Bacteria</taxon>
        <taxon>Pseudomonadati</taxon>
        <taxon>Pseudomonadota</taxon>
        <taxon>Gammaproteobacteria</taxon>
        <taxon>Pseudomonadales</taxon>
        <taxon>Pseudomonadaceae</taxon>
        <taxon>Pseudomonas</taxon>
    </lineage>
</organism>
<proteinExistence type="inferred from homology"/>
<comment type="function">
    <text evidence="1">Catalyzes the radical-mediated insertion of two sulfur atoms into the C-6 and C-8 positions of the octanoyl moiety bound to the lipoyl domains of lipoate-dependent enzymes, thereby converting the octanoylated domains into lipoylated derivatives.</text>
</comment>
<comment type="catalytic activity">
    <reaction evidence="1">
        <text>[[Fe-S] cluster scaffold protein carrying a second [4Fe-4S](2+) cluster] + N(6)-octanoyl-L-lysyl-[protein] + 2 oxidized [2Fe-2S]-[ferredoxin] + 2 S-adenosyl-L-methionine + 4 H(+) = [[Fe-S] cluster scaffold protein] + N(6)-[(R)-dihydrolipoyl]-L-lysyl-[protein] + 4 Fe(3+) + 2 hydrogen sulfide + 2 5'-deoxyadenosine + 2 L-methionine + 2 reduced [2Fe-2S]-[ferredoxin]</text>
        <dbReference type="Rhea" id="RHEA:16585"/>
        <dbReference type="Rhea" id="RHEA-COMP:9928"/>
        <dbReference type="Rhea" id="RHEA-COMP:10000"/>
        <dbReference type="Rhea" id="RHEA-COMP:10001"/>
        <dbReference type="Rhea" id="RHEA-COMP:10475"/>
        <dbReference type="Rhea" id="RHEA-COMP:14568"/>
        <dbReference type="Rhea" id="RHEA-COMP:14569"/>
        <dbReference type="ChEBI" id="CHEBI:15378"/>
        <dbReference type="ChEBI" id="CHEBI:17319"/>
        <dbReference type="ChEBI" id="CHEBI:29034"/>
        <dbReference type="ChEBI" id="CHEBI:29919"/>
        <dbReference type="ChEBI" id="CHEBI:33722"/>
        <dbReference type="ChEBI" id="CHEBI:33737"/>
        <dbReference type="ChEBI" id="CHEBI:33738"/>
        <dbReference type="ChEBI" id="CHEBI:57844"/>
        <dbReference type="ChEBI" id="CHEBI:59789"/>
        <dbReference type="ChEBI" id="CHEBI:78809"/>
        <dbReference type="ChEBI" id="CHEBI:83100"/>
        <dbReference type="EC" id="2.8.1.8"/>
    </reaction>
</comment>
<comment type="cofactor">
    <cofactor evidence="1">
        <name>[4Fe-4S] cluster</name>
        <dbReference type="ChEBI" id="CHEBI:49883"/>
    </cofactor>
    <text evidence="1">Binds 2 [4Fe-4S] clusters per subunit. One cluster is coordinated with 3 cysteines and an exchangeable S-adenosyl-L-methionine.</text>
</comment>
<comment type="pathway">
    <text evidence="1">Protein modification; protein lipoylation via endogenous pathway; protein N(6)-(lipoyl)lysine from octanoyl-[acyl-carrier-protein]: step 2/2.</text>
</comment>
<comment type="subcellular location">
    <subcellularLocation>
        <location evidence="1">Cytoplasm</location>
    </subcellularLocation>
</comment>
<comment type="similarity">
    <text evidence="1">Belongs to the radical SAM superfamily. Lipoyl synthase family.</text>
</comment>
<protein>
    <recommendedName>
        <fullName evidence="1">Lipoyl synthase</fullName>
        <ecNumber evidence="1">2.8.1.8</ecNumber>
    </recommendedName>
    <alternativeName>
        <fullName evidence="1">Lip-syn</fullName>
        <shortName evidence="1">LS</shortName>
    </alternativeName>
    <alternativeName>
        <fullName evidence="1">Lipoate synthase</fullName>
    </alternativeName>
    <alternativeName>
        <fullName evidence="1">Lipoic acid synthase</fullName>
    </alternativeName>
    <alternativeName>
        <fullName evidence="1">Sulfur insertion protein LipA</fullName>
    </alternativeName>
</protein>
<dbReference type="EC" id="2.8.1.8" evidence="1"/>
<dbReference type="EMBL" id="CP000949">
    <property type="protein sequence ID" value="ACA71126.1"/>
    <property type="molecule type" value="Genomic_DNA"/>
</dbReference>
<dbReference type="SMR" id="B1J144"/>
<dbReference type="STRING" id="390235.PputW619_0621"/>
<dbReference type="KEGG" id="ppw:PputW619_0621"/>
<dbReference type="eggNOG" id="COG0320">
    <property type="taxonomic scope" value="Bacteria"/>
</dbReference>
<dbReference type="HOGENOM" id="CLU_033144_2_1_6"/>
<dbReference type="OrthoDB" id="9787898at2"/>
<dbReference type="UniPathway" id="UPA00538">
    <property type="reaction ID" value="UER00593"/>
</dbReference>
<dbReference type="GO" id="GO:0005737">
    <property type="term" value="C:cytoplasm"/>
    <property type="evidence" value="ECO:0007669"/>
    <property type="project" value="UniProtKB-SubCell"/>
</dbReference>
<dbReference type="GO" id="GO:0051539">
    <property type="term" value="F:4 iron, 4 sulfur cluster binding"/>
    <property type="evidence" value="ECO:0007669"/>
    <property type="project" value="UniProtKB-UniRule"/>
</dbReference>
<dbReference type="GO" id="GO:0016992">
    <property type="term" value="F:lipoate synthase activity"/>
    <property type="evidence" value="ECO:0007669"/>
    <property type="project" value="UniProtKB-UniRule"/>
</dbReference>
<dbReference type="GO" id="GO:0046872">
    <property type="term" value="F:metal ion binding"/>
    <property type="evidence" value="ECO:0007669"/>
    <property type="project" value="UniProtKB-KW"/>
</dbReference>
<dbReference type="CDD" id="cd01335">
    <property type="entry name" value="Radical_SAM"/>
    <property type="match status" value="1"/>
</dbReference>
<dbReference type="FunFam" id="3.20.20.70:FF:000023">
    <property type="entry name" value="Lipoyl synthase"/>
    <property type="match status" value="1"/>
</dbReference>
<dbReference type="Gene3D" id="3.20.20.70">
    <property type="entry name" value="Aldolase class I"/>
    <property type="match status" value="1"/>
</dbReference>
<dbReference type="HAMAP" id="MF_00206">
    <property type="entry name" value="Lipoyl_synth"/>
    <property type="match status" value="1"/>
</dbReference>
<dbReference type="InterPro" id="IPR013785">
    <property type="entry name" value="Aldolase_TIM"/>
</dbReference>
<dbReference type="InterPro" id="IPR006638">
    <property type="entry name" value="Elp3/MiaA/NifB-like_rSAM"/>
</dbReference>
<dbReference type="InterPro" id="IPR031691">
    <property type="entry name" value="LIAS_N"/>
</dbReference>
<dbReference type="InterPro" id="IPR003698">
    <property type="entry name" value="Lipoyl_synth"/>
</dbReference>
<dbReference type="InterPro" id="IPR007197">
    <property type="entry name" value="rSAM"/>
</dbReference>
<dbReference type="NCBIfam" id="TIGR00510">
    <property type="entry name" value="lipA"/>
    <property type="match status" value="1"/>
</dbReference>
<dbReference type="NCBIfam" id="NF004019">
    <property type="entry name" value="PRK05481.1"/>
    <property type="match status" value="1"/>
</dbReference>
<dbReference type="NCBIfam" id="NF009544">
    <property type="entry name" value="PRK12928.1"/>
    <property type="match status" value="1"/>
</dbReference>
<dbReference type="PANTHER" id="PTHR10949">
    <property type="entry name" value="LIPOYL SYNTHASE"/>
    <property type="match status" value="1"/>
</dbReference>
<dbReference type="PANTHER" id="PTHR10949:SF0">
    <property type="entry name" value="LIPOYL SYNTHASE, MITOCHONDRIAL"/>
    <property type="match status" value="1"/>
</dbReference>
<dbReference type="Pfam" id="PF16881">
    <property type="entry name" value="LIAS_N"/>
    <property type="match status" value="1"/>
</dbReference>
<dbReference type="Pfam" id="PF04055">
    <property type="entry name" value="Radical_SAM"/>
    <property type="match status" value="1"/>
</dbReference>
<dbReference type="PIRSF" id="PIRSF005963">
    <property type="entry name" value="Lipoyl_synth"/>
    <property type="match status" value="1"/>
</dbReference>
<dbReference type="SFLD" id="SFLDF00271">
    <property type="entry name" value="lipoyl_synthase"/>
    <property type="match status" value="1"/>
</dbReference>
<dbReference type="SFLD" id="SFLDG01058">
    <property type="entry name" value="lipoyl_synthase_like"/>
    <property type="match status" value="1"/>
</dbReference>
<dbReference type="SMART" id="SM00729">
    <property type="entry name" value="Elp3"/>
    <property type="match status" value="1"/>
</dbReference>
<dbReference type="SUPFAM" id="SSF102114">
    <property type="entry name" value="Radical SAM enzymes"/>
    <property type="match status" value="1"/>
</dbReference>
<dbReference type="PROSITE" id="PS51918">
    <property type="entry name" value="RADICAL_SAM"/>
    <property type="match status" value="1"/>
</dbReference>
<name>LIPA_PSEPW</name>
<reference key="1">
    <citation type="submission" date="2008-02" db="EMBL/GenBank/DDBJ databases">
        <title>Complete sequence of Pseudomonas putida W619.</title>
        <authorList>
            <person name="Copeland A."/>
            <person name="Lucas S."/>
            <person name="Lapidus A."/>
            <person name="Barry K."/>
            <person name="Detter J.C."/>
            <person name="Glavina del Rio T."/>
            <person name="Dalin E."/>
            <person name="Tice H."/>
            <person name="Pitluck S."/>
            <person name="Chain P."/>
            <person name="Malfatti S."/>
            <person name="Shin M."/>
            <person name="Vergez L."/>
            <person name="Schmutz J."/>
            <person name="Larimer F."/>
            <person name="Land M."/>
            <person name="Hauser L."/>
            <person name="Kyrpides N."/>
            <person name="Kim E."/>
            <person name="Taghavi S."/>
            <person name="Vangronsveld D."/>
            <person name="van der Lelie D."/>
            <person name="Richardson P."/>
        </authorList>
    </citation>
    <scope>NUCLEOTIDE SEQUENCE [LARGE SCALE GENOMIC DNA]</scope>
    <source>
        <strain>W619</strain>
    </source>
</reference>
<sequence length="338" mass="37961">MTTVQEAVPNLIPTQDATPRPAPKKVEAGVKLRGADKVARIPVKIIPTDELPKKPDWIRVRIPVSPEVDRIKQLLRKHKLHSVCEEASCPNLGECFSGGTATFMIMGDICTRRCPFCDVGHGRPKPLDVDEPKNLAVAIADLRLKYVVITSVDRDDLRDGGAQHFADCIREIRALSPGVQLETLVPDYRGRMDVALEITAQEPPDVFNHNLETVPRLYKAARPGSDYDWSLDLLQKFKQMVPHVPTKSGLMLGLGETDEEVIEVMHRMREHDIDMLTLGQYLQPSRSHLPVQRFVHPDTFAWFAEEGYKMGFKNVASGPLVRSSYHADQQAHEAKIKL</sequence>
<accession>B1J144</accession>
<keyword id="KW-0004">4Fe-4S</keyword>
<keyword id="KW-0963">Cytoplasm</keyword>
<keyword id="KW-0408">Iron</keyword>
<keyword id="KW-0411">Iron-sulfur</keyword>
<keyword id="KW-0479">Metal-binding</keyword>
<keyword id="KW-0949">S-adenosyl-L-methionine</keyword>
<keyword id="KW-0808">Transferase</keyword>
<feature type="chain" id="PRO_1000099622" description="Lipoyl synthase">
    <location>
        <begin position="1"/>
        <end position="338"/>
    </location>
</feature>
<feature type="domain" description="Radical SAM core" evidence="2">
    <location>
        <begin position="96"/>
        <end position="313"/>
    </location>
</feature>
<feature type="region of interest" description="Disordered" evidence="3">
    <location>
        <begin position="1"/>
        <end position="24"/>
    </location>
</feature>
<feature type="binding site" evidence="1">
    <location>
        <position position="84"/>
    </location>
    <ligand>
        <name>[4Fe-4S] cluster</name>
        <dbReference type="ChEBI" id="CHEBI:49883"/>
        <label>1</label>
    </ligand>
</feature>
<feature type="binding site" evidence="1">
    <location>
        <position position="89"/>
    </location>
    <ligand>
        <name>[4Fe-4S] cluster</name>
        <dbReference type="ChEBI" id="CHEBI:49883"/>
        <label>1</label>
    </ligand>
</feature>
<feature type="binding site" evidence="1">
    <location>
        <position position="95"/>
    </location>
    <ligand>
        <name>[4Fe-4S] cluster</name>
        <dbReference type="ChEBI" id="CHEBI:49883"/>
        <label>1</label>
    </ligand>
</feature>
<feature type="binding site" evidence="1">
    <location>
        <position position="110"/>
    </location>
    <ligand>
        <name>[4Fe-4S] cluster</name>
        <dbReference type="ChEBI" id="CHEBI:49883"/>
        <label>2</label>
        <note>4Fe-4S-S-AdoMet</note>
    </ligand>
</feature>
<feature type="binding site" evidence="1">
    <location>
        <position position="114"/>
    </location>
    <ligand>
        <name>[4Fe-4S] cluster</name>
        <dbReference type="ChEBI" id="CHEBI:49883"/>
        <label>2</label>
        <note>4Fe-4S-S-AdoMet</note>
    </ligand>
</feature>
<feature type="binding site" evidence="1">
    <location>
        <position position="117"/>
    </location>
    <ligand>
        <name>[4Fe-4S] cluster</name>
        <dbReference type="ChEBI" id="CHEBI:49883"/>
        <label>2</label>
        <note>4Fe-4S-S-AdoMet</note>
    </ligand>
</feature>
<feature type="binding site" evidence="1">
    <location>
        <position position="324"/>
    </location>
    <ligand>
        <name>[4Fe-4S] cluster</name>
        <dbReference type="ChEBI" id="CHEBI:49883"/>
        <label>1</label>
    </ligand>
</feature>
<gene>
    <name evidence="1" type="primary">lipA</name>
    <name type="ordered locus">PputW619_0621</name>
</gene>